<name>INO1_CANGA</name>
<dbReference type="EC" id="5.5.1.4" evidence="1"/>
<dbReference type="EMBL" id="CR380955">
    <property type="protein sequence ID" value="CAG60450.1"/>
    <property type="molecule type" value="Genomic_DNA"/>
</dbReference>
<dbReference type="RefSeq" id="XP_447513.1">
    <property type="nucleotide sequence ID" value="XM_447513.1"/>
</dbReference>
<dbReference type="SMR" id="Q6FQI1"/>
<dbReference type="FunCoup" id="Q6FQI1">
    <property type="interactions" value="743"/>
</dbReference>
<dbReference type="STRING" id="284593.Q6FQI1"/>
<dbReference type="EnsemblFungi" id="CAGL0I06050g-T">
    <property type="protein sequence ID" value="CAGL0I06050g-T-p1"/>
    <property type="gene ID" value="CAGL0I06050g"/>
</dbReference>
<dbReference type="GeneID" id="2889369"/>
<dbReference type="KEGG" id="cgr:2889369"/>
<dbReference type="CGD" id="CAL0129696">
    <property type="gene designation" value="INO1"/>
</dbReference>
<dbReference type="VEuPathDB" id="FungiDB:B1J91_I06050g"/>
<dbReference type="VEuPathDB" id="FungiDB:CAGL0I06050g"/>
<dbReference type="eggNOG" id="KOG0693">
    <property type="taxonomic scope" value="Eukaryota"/>
</dbReference>
<dbReference type="HOGENOM" id="CLU_021486_2_0_1"/>
<dbReference type="InParanoid" id="Q6FQI1"/>
<dbReference type="OMA" id="VYVPMKE"/>
<dbReference type="UniPathway" id="UPA00823">
    <property type="reaction ID" value="UER00787"/>
</dbReference>
<dbReference type="Proteomes" id="UP000002428">
    <property type="component" value="Chromosome I"/>
</dbReference>
<dbReference type="GO" id="GO:0005737">
    <property type="term" value="C:cytoplasm"/>
    <property type="evidence" value="ECO:0007669"/>
    <property type="project" value="UniProtKB-SubCell"/>
</dbReference>
<dbReference type="GO" id="GO:0004512">
    <property type="term" value="F:inositol-3-phosphate synthase activity"/>
    <property type="evidence" value="ECO:0007669"/>
    <property type="project" value="UniProtKB-EC"/>
</dbReference>
<dbReference type="GO" id="GO:0006021">
    <property type="term" value="P:inositol biosynthetic process"/>
    <property type="evidence" value="ECO:0007669"/>
    <property type="project" value="UniProtKB-UniPathway"/>
</dbReference>
<dbReference type="GO" id="GO:0008654">
    <property type="term" value="P:phospholipid biosynthetic process"/>
    <property type="evidence" value="ECO:0007669"/>
    <property type="project" value="UniProtKB-KW"/>
</dbReference>
<dbReference type="FunFam" id="3.40.50.720:FF:000334">
    <property type="entry name" value="Inositol-3-phosphate synthase"/>
    <property type="match status" value="1"/>
</dbReference>
<dbReference type="FunFam" id="3.40.50.720:FF:000069">
    <property type="entry name" value="Inositol-3-phosphate synthase 1"/>
    <property type="match status" value="1"/>
</dbReference>
<dbReference type="Gene3D" id="3.40.50.720">
    <property type="entry name" value="NAD(P)-binding Rossmann-like Domain"/>
    <property type="match status" value="2"/>
</dbReference>
<dbReference type="InterPro" id="IPR002587">
    <property type="entry name" value="Myo-inos-1-P_Synthase"/>
</dbReference>
<dbReference type="InterPro" id="IPR013021">
    <property type="entry name" value="Myo-inos-1-P_Synthase_GAPDH"/>
</dbReference>
<dbReference type="InterPro" id="IPR036291">
    <property type="entry name" value="NAD(P)-bd_dom_sf"/>
</dbReference>
<dbReference type="PANTHER" id="PTHR11510">
    <property type="entry name" value="MYO-INOSITOL-1 PHOSPHATE SYNTHASE"/>
    <property type="match status" value="1"/>
</dbReference>
<dbReference type="Pfam" id="PF01658">
    <property type="entry name" value="Inos-1-P_synth"/>
    <property type="match status" value="1"/>
</dbReference>
<dbReference type="Pfam" id="PF07994">
    <property type="entry name" value="NAD_binding_5"/>
    <property type="match status" value="1"/>
</dbReference>
<dbReference type="PIRSF" id="PIRSF015578">
    <property type="entry name" value="Myoinos-ppht_syn"/>
    <property type="match status" value="1"/>
</dbReference>
<dbReference type="SUPFAM" id="SSF55347">
    <property type="entry name" value="Glyceraldehyde-3-phosphate dehydrogenase-like, C-terminal domain"/>
    <property type="match status" value="1"/>
</dbReference>
<dbReference type="SUPFAM" id="SSF51735">
    <property type="entry name" value="NAD(P)-binding Rossmann-fold domains"/>
    <property type="match status" value="1"/>
</dbReference>
<reference key="1">
    <citation type="journal article" date="2004" name="Nature">
        <title>Genome evolution in yeasts.</title>
        <authorList>
            <person name="Dujon B."/>
            <person name="Sherman D."/>
            <person name="Fischer G."/>
            <person name="Durrens P."/>
            <person name="Casaregola S."/>
            <person name="Lafontaine I."/>
            <person name="de Montigny J."/>
            <person name="Marck C."/>
            <person name="Neuveglise C."/>
            <person name="Talla E."/>
            <person name="Goffard N."/>
            <person name="Frangeul L."/>
            <person name="Aigle M."/>
            <person name="Anthouard V."/>
            <person name="Babour A."/>
            <person name="Barbe V."/>
            <person name="Barnay S."/>
            <person name="Blanchin S."/>
            <person name="Beckerich J.-M."/>
            <person name="Beyne E."/>
            <person name="Bleykasten C."/>
            <person name="Boisrame A."/>
            <person name="Boyer J."/>
            <person name="Cattolico L."/>
            <person name="Confanioleri F."/>
            <person name="de Daruvar A."/>
            <person name="Despons L."/>
            <person name="Fabre E."/>
            <person name="Fairhead C."/>
            <person name="Ferry-Dumazet H."/>
            <person name="Groppi A."/>
            <person name="Hantraye F."/>
            <person name="Hennequin C."/>
            <person name="Jauniaux N."/>
            <person name="Joyet P."/>
            <person name="Kachouri R."/>
            <person name="Kerrest A."/>
            <person name="Koszul R."/>
            <person name="Lemaire M."/>
            <person name="Lesur I."/>
            <person name="Ma L."/>
            <person name="Muller H."/>
            <person name="Nicaud J.-M."/>
            <person name="Nikolski M."/>
            <person name="Oztas S."/>
            <person name="Ozier-Kalogeropoulos O."/>
            <person name="Pellenz S."/>
            <person name="Potier S."/>
            <person name="Richard G.-F."/>
            <person name="Straub M.-L."/>
            <person name="Suleau A."/>
            <person name="Swennen D."/>
            <person name="Tekaia F."/>
            <person name="Wesolowski-Louvel M."/>
            <person name="Westhof E."/>
            <person name="Wirth B."/>
            <person name="Zeniou-Meyer M."/>
            <person name="Zivanovic Y."/>
            <person name="Bolotin-Fukuhara M."/>
            <person name="Thierry A."/>
            <person name="Bouchier C."/>
            <person name="Caudron B."/>
            <person name="Scarpelli C."/>
            <person name="Gaillardin C."/>
            <person name="Weissenbach J."/>
            <person name="Wincker P."/>
            <person name="Souciet J.-L."/>
        </authorList>
    </citation>
    <scope>NUCLEOTIDE SEQUENCE [LARGE SCALE GENOMIC DNA]</scope>
    <source>
        <strain>ATCC 2001 / BCRC 20586 / JCM 3761 / NBRC 0622 / NRRL Y-65 / CBS 138</strain>
    </source>
</reference>
<evidence type="ECO:0000250" key="1">
    <source>
        <dbReference type="UniProtKB" id="P11986"/>
    </source>
</evidence>
<evidence type="ECO:0000250" key="2">
    <source>
        <dbReference type="UniProtKB" id="Q9NPH2"/>
    </source>
</evidence>
<evidence type="ECO:0000305" key="3"/>
<proteinExistence type="inferred from homology"/>
<feature type="chain" id="PRO_0000195184" description="Inositol-3-phosphate synthase">
    <location>
        <begin position="1"/>
        <end position="538"/>
    </location>
</feature>
<feature type="binding site" evidence="1">
    <location>
        <position position="74"/>
    </location>
    <ligand>
        <name>NAD(+)</name>
        <dbReference type="ChEBI" id="CHEBI:57540"/>
    </ligand>
</feature>
<feature type="binding site" evidence="1">
    <location>
        <position position="75"/>
    </location>
    <ligand>
        <name>NAD(+)</name>
        <dbReference type="ChEBI" id="CHEBI:57540"/>
    </ligand>
</feature>
<feature type="binding site" evidence="1">
    <location>
        <position position="76"/>
    </location>
    <ligand>
        <name>NAD(+)</name>
        <dbReference type="ChEBI" id="CHEBI:57540"/>
    </ligand>
</feature>
<feature type="binding site" evidence="1">
    <location>
        <position position="77"/>
    </location>
    <ligand>
        <name>NAD(+)</name>
        <dbReference type="ChEBI" id="CHEBI:57540"/>
    </ligand>
</feature>
<feature type="binding site" evidence="1">
    <location>
        <position position="150"/>
    </location>
    <ligand>
        <name>NAD(+)</name>
        <dbReference type="ChEBI" id="CHEBI:57540"/>
    </ligand>
</feature>
<feature type="binding site" evidence="1">
    <location>
        <position position="186"/>
    </location>
    <ligand>
        <name>NAD(+)</name>
        <dbReference type="ChEBI" id="CHEBI:57540"/>
    </ligand>
</feature>
<feature type="binding site" evidence="1">
    <location>
        <position position="187"/>
    </location>
    <ligand>
        <name>NAD(+)</name>
        <dbReference type="ChEBI" id="CHEBI:57540"/>
    </ligand>
</feature>
<feature type="binding site" evidence="1">
    <location>
        <position position="197"/>
    </location>
    <ligand>
        <name>NAD(+)</name>
        <dbReference type="ChEBI" id="CHEBI:57540"/>
    </ligand>
</feature>
<feature type="binding site" evidence="1">
    <location>
        <position position="198"/>
    </location>
    <ligand>
        <name>NAD(+)</name>
        <dbReference type="ChEBI" id="CHEBI:57540"/>
    </ligand>
</feature>
<feature type="binding site" evidence="1">
    <location>
        <position position="200"/>
    </location>
    <ligand>
        <name>NAD(+)</name>
        <dbReference type="ChEBI" id="CHEBI:57540"/>
    </ligand>
</feature>
<feature type="binding site" evidence="1">
    <location>
        <position position="247"/>
    </location>
    <ligand>
        <name>NAD(+)</name>
        <dbReference type="ChEBI" id="CHEBI:57540"/>
    </ligand>
</feature>
<feature type="binding site" evidence="1">
    <location>
        <position position="248"/>
    </location>
    <ligand>
        <name>NAD(+)</name>
        <dbReference type="ChEBI" id="CHEBI:57540"/>
    </ligand>
</feature>
<feature type="binding site" evidence="1">
    <location>
        <position position="249"/>
    </location>
    <ligand>
        <name>NAD(+)</name>
        <dbReference type="ChEBI" id="CHEBI:57540"/>
    </ligand>
</feature>
<feature type="binding site" evidence="1">
    <location>
        <position position="250"/>
    </location>
    <ligand>
        <name>NAD(+)</name>
        <dbReference type="ChEBI" id="CHEBI:57540"/>
    </ligand>
</feature>
<feature type="binding site" evidence="1">
    <location>
        <position position="298"/>
    </location>
    <ligand>
        <name>NAD(+)</name>
        <dbReference type="ChEBI" id="CHEBI:57540"/>
    </ligand>
</feature>
<feature type="binding site" evidence="1">
    <location>
        <position position="299"/>
    </location>
    <ligand>
        <name>NAD(+)</name>
        <dbReference type="ChEBI" id="CHEBI:57540"/>
    </ligand>
</feature>
<feature type="binding site" evidence="1">
    <location>
        <position position="323"/>
    </location>
    <ligand>
        <name>NAD(+)</name>
        <dbReference type="ChEBI" id="CHEBI:57540"/>
    </ligand>
</feature>
<feature type="binding site" evidence="1">
    <location>
        <position position="326"/>
    </location>
    <ligand>
        <name>NAD(+)</name>
        <dbReference type="ChEBI" id="CHEBI:57540"/>
    </ligand>
</feature>
<feature type="binding site" evidence="1">
    <location>
        <position position="357"/>
    </location>
    <ligand>
        <name>NAD(+)</name>
        <dbReference type="ChEBI" id="CHEBI:57540"/>
    </ligand>
</feature>
<feature type="binding site" evidence="1">
    <location>
        <position position="358"/>
    </location>
    <ligand>
        <name>NAD(+)</name>
        <dbReference type="ChEBI" id="CHEBI:57540"/>
    </ligand>
</feature>
<feature type="binding site" evidence="1">
    <location>
        <position position="359"/>
    </location>
    <ligand>
        <name>NAD(+)</name>
        <dbReference type="ChEBI" id="CHEBI:57540"/>
    </ligand>
</feature>
<feature type="binding site" evidence="1">
    <location>
        <position position="372"/>
    </location>
    <ligand>
        <name>NAD(+)</name>
        <dbReference type="ChEBI" id="CHEBI:57540"/>
    </ligand>
</feature>
<feature type="binding site" evidence="1">
    <location>
        <position position="412"/>
    </location>
    <ligand>
        <name>NAD(+)</name>
        <dbReference type="ChEBI" id="CHEBI:57540"/>
    </ligand>
</feature>
<feature type="binding site" evidence="1">
    <location>
        <position position="413"/>
    </location>
    <ligand>
        <name>NAD(+)</name>
        <dbReference type="ChEBI" id="CHEBI:57540"/>
    </ligand>
</feature>
<feature type="binding site" evidence="1">
    <location>
        <position position="441"/>
    </location>
    <ligand>
        <name>NAD(+)</name>
        <dbReference type="ChEBI" id="CHEBI:57540"/>
    </ligand>
</feature>
<feature type="binding site" evidence="1">
    <location>
        <position position="442"/>
    </location>
    <ligand>
        <name>NAD(+)</name>
        <dbReference type="ChEBI" id="CHEBI:57540"/>
    </ligand>
</feature>
<keyword id="KW-0963">Cytoplasm</keyword>
<keyword id="KW-0398">Inositol biosynthesis</keyword>
<keyword id="KW-0413">Isomerase</keyword>
<keyword id="KW-0444">Lipid biosynthesis</keyword>
<keyword id="KW-0443">Lipid metabolism</keyword>
<keyword id="KW-0520">NAD</keyword>
<keyword id="KW-0594">Phospholipid biosynthesis</keyword>
<keyword id="KW-1208">Phospholipid metabolism</keyword>
<keyword id="KW-1185">Reference proteome</keyword>
<accession>Q6FQI1</accession>
<gene>
    <name type="primary">INO1</name>
    <name type="ordered locus">CAGL0I06050g</name>
</gene>
<sequence>MTVNKGISIRVNNVGDKVSYKENELLTNYTYHTNVVHTNSDKTQFEVTPLDKNYQFKVDLNKPERLGVMLVGLGGNNGSTMMAAVLANKHNVCFRTRDKEGLTEPNYYGSLTQSSTIKLGVDSKGKDVYVPFNSLVPMVNPNDFVVSGWDINGATMDQAMERASVLEVDLRNKLAPMMKDHKPLKSVYYPDFIAANQDERADNCLNVDPQTGKVTTTGKWEHLNHIRNDIRTFKQQNDLDKVIILWTANTERYVEILPGVNDTMENLLEAIKNDHTEIAPSTIFAAASILEHCPYINGSPQNTFVPGLIELAEKNDSLIAGDDFKSGQTKMKSVLAQFLVDAGIRPVSIASYNHLGNNDGYNLSSPQQFRSKEISKASVVDDIIESNPILYNDKLGNKIDHCIVIKYMHAVGDSKVAMDEYYSELMLGGHNRISIHNVCEDSLLATPLIIDLIVMTEFCSRVTYRNVDGQDGAEAKGDFENFYPVLSFLSYWLKAPLTKPGYQPINGLNKQRTALENFLRLLIGLPAIDELRFEERLK</sequence>
<comment type="function">
    <text evidence="1 2">Key enzyme in myo-inositol biosynthesis pathway that catalyzes the conversion of glucose 6-phosphate to 1-myo-inositol 1-phosphate in a NAD-dependent manner (By similarity). Rate-limiting enzyme in the synthesis of all inositol-containing compounds (By similarity).</text>
</comment>
<comment type="catalytic activity">
    <reaction evidence="1">
        <text>D-glucose 6-phosphate = 1D-myo-inositol 3-phosphate</text>
        <dbReference type="Rhea" id="RHEA:10716"/>
        <dbReference type="ChEBI" id="CHEBI:58401"/>
        <dbReference type="ChEBI" id="CHEBI:61548"/>
        <dbReference type="EC" id="5.5.1.4"/>
    </reaction>
</comment>
<comment type="cofactor">
    <cofactor evidence="1">
        <name>NAD(+)</name>
        <dbReference type="ChEBI" id="CHEBI:57540"/>
    </cofactor>
</comment>
<comment type="pathway">
    <text>Polyol metabolism; myo-inositol biosynthesis; myo-inositol from D-glucose 6-phosphate: step 1/2.</text>
</comment>
<comment type="subunit">
    <text evidence="1">Homotetramer.</text>
</comment>
<comment type="subcellular location">
    <subcellularLocation>
        <location evidence="1">Cytoplasm</location>
    </subcellularLocation>
</comment>
<comment type="similarity">
    <text evidence="3">Belongs to the myo-inositol 1-phosphate synthase family.</text>
</comment>
<organism>
    <name type="scientific">Candida glabrata (strain ATCC 2001 / BCRC 20586 / JCM 3761 / NBRC 0622 / NRRL Y-65 / CBS 138)</name>
    <name type="common">Yeast</name>
    <name type="synonym">Nakaseomyces glabratus</name>
    <dbReference type="NCBI Taxonomy" id="284593"/>
    <lineage>
        <taxon>Eukaryota</taxon>
        <taxon>Fungi</taxon>
        <taxon>Dikarya</taxon>
        <taxon>Ascomycota</taxon>
        <taxon>Saccharomycotina</taxon>
        <taxon>Saccharomycetes</taxon>
        <taxon>Saccharomycetales</taxon>
        <taxon>Saccharomycetaceae</taxon>
        <taxon>Nakaseomyces</taxon>
    </lineage>
</organism>
<protein>
    <recommendedName>
        <fullName>Inositol-3-phosphate synthase</fullName>
        <shortName>MIP synthase</shortName>
        <ecNumber evidence="1">5.5.1.4</ecNumber>
    </recommendedName>
    <alternativeName>
        <fullName>Myo-inositol 1-phosphate synthase</fullName>
        <shortName>IPS</shortName>
        <shortName>MI-1-P synthase</shortName>
    </alternativeName>
</protein>